<name>GAGY_DROME</name>
<accession>P10405</accession>
<comment type="subcellular location">
    <subcellularLocation>
        <location evidence="2">Virion</location>
    </subcellularLocation>
</comment>
<evidence type="ECO:0000256" key="1">
    <source>
        <dbReference type="SAM" id="MobiDB-lite"/>
    </source>
</evidence>
<evidence type="ECO:0000305" key="2"/>
<sequence length="451" mass="50675">MSWAHNYRKVKVEYESEDSWEEEQVGQALGRPLDSATVDITMDPNQIQALIDNAVRQALSQQQSQFQTQLNSLAARVQSLQVEAPQIKIYEKVSVNPDVRCDIPLDIIKSVPEFSGTQDEYVAWRQSAIYAYELFKPYNGSSAHYQAVAILRNKIRGAAGALLVSHNTVLNFDAILARLDCTYSDKTSLRLLRQGLEMVRQGDLPLMQYYDEVEKKLTLVTNKIVMTHEQEGADLLNAEVRADALHAFISGLKKALRAVVFPAQPKDLPSALALAREAEASIERSMFANSYAKAVEERAHSGANGKSRFQGKPNKEEQGQDRNPHFTKRPKNNGQTNKDTQAQAPQPMEVDSSSRFRQRTEHYQNHPNESNAFKRRNSSERSTGPRRQRLNNVVQEAPKQKDPKEEYEKTAKAAVEEIDSENEYAPSDDSLNFLGGAPGCRSLNDGWLGEP</sequence>
<organism>
    <name type="scientific">Drosophila melanogaster</name>
    <name type="common">Fruit fly</name>
    <dbReference type="NCBI Taxonomy" id="7227"/>
    <lineage>
        <taxon>Eukaryota</taxon>
        <taxon>Metazoa</taxon>
        <taxon>Ecdysozoa</taxon>
        <taxon>Arthropoda</taxon>
        <taxon>Hexapoda</taxon>
        <taxon>Insecta</taxon>
        <taxon>Pterygota</taxon>
        <taxon>Neoptera</taxon>
        <taxon>Endopterygota</taxon>
        <taxon>Diptera</taxon>
        <taxon>Brachycera</taxon>
        <taxon>Muscomorpha</taxon>
        <taxon>Ephydroidea</taxon>
        <taxon>Drosophilidae</taxon>
        <taxon>Drosophila</taxon>
        <taxon>Sophophora</taxon>
    </lineage>
</organism>
<reference key="1">
    <citation type="journal article" date="1986" name="Mol. Cell. Biol.">
        <title>The Drosophila melanogaster gypsy transposable element encodes putative gene products homologous to retroviral proteins.</title>
        <authorList>
            <person name="Marlor R.L."/>
            <person name="Parkhurst S.M."/>
            <person name="Corces V.G."/>
        </authorList>
    </citation>
    <scope>NUCLEOTIDE SEQUENCE [GENOMIC DNA]</scope>
</reference>
<keyword id="KW-0814">Transposable element</keyword>
<keyword id="KW-0946">Virion</keyword>
<dbReference type="EMBL" id="M12927">
    <property type="protein sequence ID" value="AAA70218.1"/>
    <property type="molecule type" value="Genomic_DNA"/>
</dbReference>
<dbReference type="EMBL" id="AF033821">
    <property type="protein sequence ID" value="AAC82603.1"/>
    <property type="molecule type" value="Genomic_DNA"/>
</dbReference>
<dbReference type="PIR" id="A25666">
    <property type="entry name" value="FOFFGY"/>
</dbReference>
<dbReference type="SMR" id="P10405"/>
<dbReference type="FlyBase" id="FBgn0014965">
    <property type="gene designation" value="gypsy\gag"/>
</dbReference>
<dbReference type="PRO" id="PR:P10405"/>
<feature type="chain" id="PRO_0000087424" description="Retrovirus-related Gag polyprotein from transposon gypsy">
    <location>
        <begin position="1"/>
        <end position="451"/>
    </location>
</feature>
<feature type="region of interest" description="Disordered" evidence="1">
    <location>
        <begin position="298"/>
        <end position="407"/>
    </location>
</feature>
<feature type="region of interest" description="Disordered" evidence="1">
    <location>
        <begin position="419"/>
        <end position="451"/>
    </location>
</feature>
<feature type="compositionally biased region" description="Basic and acidic residues" evidence="1">
    <location>
        <begin position="313"/>
        <end position="324"/>
    </location>
</feature>
<feature type="compositionally biased region" description="Polar residues" evidence="1">
    <location>
        <begin position="332"/>
        <end position="344"/>
    </location>
</feature>
<feature type="compositionally biased region" description="Basic and acidic residues" evidence="1">
    <location>
        <begin position="352"/>
        <end position="364"/>
    </location>
</feature>
<feature type="compositionally biased region" description="Basic and acidic residues" evidence="1">
    <location>
        <begin position="398"/>
        <end position="407"/>
    </location>
</feature>
<proteinExistence type="predicted"/>
<gene>
    <name type="primary">gag</name>
</gene>
<protein>
    <recommendedName>
        <fullName>Retrovirus-related Gag polyprotein from transposon gypsy</fullName>
    </recommendedName>
</protein>